<protein>
    <recommendedName>
        <fullName>Unknown protein 23</fullName>
    </recommendedName>
</protein>
<evidence type="ECO:0000303" key="1">
    <source>
    </source>
</evidence>
<accession>P85946</accession>
<sequence length="9" mass="1079">MQVNLRCSE</sequence>
<feature type="chain" id="PRO_0000347310" description="Unknown protein 23">
    <location>
        <begin position="1" status="less than"/>
        <end position="9" status="greater than"/>
    </location>
</feature>
<feature type="non-terminal residue" evidence="1">
    <location>
        <position position="1"/>
    </location>
</feature>
<feature type="non-terminal residue" evidence="1">
    <location>
        <position position="9"/>
    </location>
</feature>
<organism>
    <name type="scientific">Pseudotsuga menziesii</name>
    <name type="common">Douglas-fir</name>
    <name type="synonym">Abies menziesii</name>
    <dbReference type="NCBI Taxonomy" id="3357"/>
    <lineage>
        <taxon>Eukaryota</taxon>
        <taxon>Viridiplantae</taxon>
        <taxon>Streptophyta</taxon>
        <taxon>Embryophyta</taxon>
        <taxon>Tracheophyta</taxon>
        <taxon>Spermatophyta</taxon>
        <taxon>Pinopsida</taxon>
        <taxon>Pinidae</taxon>
        <taxon>Conifers I</taxon>
        <taxon>Pinales</taxon>
        <taxon>Pinaceae</taxon>
        <taxon>Pseudotsuga</taxon>
    </lineage>
</organism>
<reference key="1">
    <citation type="journal article" date="2008" name="J. Proteomics">
        <title>A proteomics approach to identify proteins differentially expressed in Douglas-fir seedlings infected by Phellinus sulphurascens.</title>
        <authorList>
            <person name="Islam M.A."/>
            <person name="Sturrock R.N."/>
            <person name="Ekramoddoullah A.K.M."/>
        </authorList>
    </citation>
    <scope>IDENTIFICATION BY MASS SPECTROMETRY</scope>
</reference>
<proteinExistence type="evidence at protein level"/>
<name>UP23_PSEMZ</name>